<sequence length="444" mass="50514">MPVSSDPKTFYIETFGCQMNFHDSEKVVGTLISQGYRQVETELDAGLILYNTCSIRDKAEQKVFHRLSEFRQLQKEGKRFAVLGCVAQQEGEKIFERAPHVSLVAGSASYRNLAEMLVQIESGSQRITGLDDRETDQTFETEFTARGNAHRGYITIIEGCDKFCAYCVVPYTRGKERSRSAESVLREARQMADAGFTDVQLLGQNVNSYHDPSGTMTFAELLTAVGEITGIKRVRFTTSHPRDFTRDIVEAIDNHPTLCDHVHLPVQSGSSKVLREMFREYTREQYLERISWMKATKNRKLSITTDVIVGFPGETETEFEETLALLDHVQYDGVFSFKYSPRPNTPALKYIDTVPEQEKSRRLQILMEHQREIQRANYRKHIGETIEVMVEAENATRAQWIGRTSQNKTLNFTVPQTVQPEIGSYHQVLVTQAFPNSLVGELVG</sequence>
<name>MIAB_KORVE</name>
<protein>
    <recommendedName>
        <fullName evidence="1">tRNA-2-methylthio-N(6)-dimethylallyladenosine synthase</fullName>
        <ecNumber evidence="1">2.8.4.3</ecNumber>
    </recommendedName>
    <alternativeName>
        <fullName evidence="1">(Dimethylallyl)adenosine tRNA methylthiotransferase MiaB</fullName>
    </alternativeName>
    <alternativeName>
        <fullName evidence="1">tRNA-i(6)A37 methylthiotransferase</fullName>
    </alternativeName>
</protein>
<feature type="chain" id="PRO_0000374083" description="tRNA-2-methylthio-N(6)-dimethylallyladenosine synthase">
    <location>
        <begin position="1"/>
        <end position="444"/>
    </location>
</feature>
<feature type="domain" description="MTTase N-terminal" evidence="1">
    <location>
        <begin position="8"/>
        <end position="122"/>
    </location>
</feature>
<feature type="domain" description="Radical SAM core" evidence="2">
    <location>
        <begin position="146"/>
        <end position="376"/>
    </location>
</feature>
<feature type="domain" description="TRAM" evidence="1">
    <location>
        <begin position="379"/>
        <end position="444"/>
    </location>
</feature>
<feature type="binding site" evidence="1">
    <location>
        <position position="17"/>
    </location>
    <ligand>
        <name>[4Fe-4S] cluster</name>
        <dbReference type="ChEBI" id="CHEBI:49883"/>
        <label>1</label>
    </ligand>
</feature>
<feature type="binding site" evidence="1">
    <location>
        <position position="53"/>
    </location>
    <ligand>
        <name>[4Fe-4S] cluster</name>
        <dbReference type="ChEBI" id="CHEBI:49883"/>
        <label>1</label>
    </ligand>
</feature>
<feature type="binding site" evidence="1">
    <location>
        <position position="85"/>
    </location>
    <ligand>
        <name>[4Fe-4S] cluster</name>
        <dbReference type="ChEBI" id="CHEBI:49883"/>
        <label>1</label>
    </ligand>
</feature>
<feature type="binding site" evidence="1">
    <location>
        <position position="160"/>
    </location>
    <ligand>
        <name>[4Fe-4S] cluster</name>
        <dbReference type="ChEBI" id="CHEBI:49883"/>
        <label>2</label>
        <note>4Fe-4S-S-AdoMet</note>
    </ligand>
</feature>
<feature type="binding site" evidence="1">
    <location>
        <position position="164"/>
    </location>
    <ligand>
        <name>[4Fe-4S] cluster</name>
        <dbReference type="ChEBI" id="CHEBI:49883"/>
        <label>2</label>
        <note>4Fe-4S-S-AdoMet</note>
    </ligand>
</feature>
<feature type="binding site" evidence="1">
    <location>
        <position position="167"/>
    </location>
    <ligand>
        <name>[4Fe-4S] cluster</name>
        <dbReference type="ChEBI" id="CHEBI:49883"/>
        <label>2</label>
        <note>4Fe-4S-S-AdoMet</note>
    </ligand>
</feature>
<keyword id="KW-0004">4Fe-4S</keyword>
<keyword id="KW-0963">Cytoplasm</keyword>
<keyword id="KW-0408">Iron</keyword>
<keyword id="KW-0411">Iron-sulfur</keyword>
<keyword id="KW-0479">Metal-binding</keyword>
<keyword id="KW-1185">Reference proteome</keyword>
<keyword id="KW-0949">S-adenosyl-L-methionine</keyword>
<keyword id="KW-0808">Transferase</keyword>
<keyword id="KW-0819">tRNA processing</keyword>
<proteinExistence type="inferred from homology"/>
<accession>Q1IQH5</accession>
<reference key="1">
    <citation type="journal article" date="2009" name="Appl. Environ. Microbiol.">
        <title>Three genomes from the phylum Acidobacteria provide insight into the lifestyles of these microorganisms in soils.</title>
        <authorList>
            <person name="Ward N.L."/>
            <person name="Challacombe J.F."/>
            <person name="Janssen P.H."/>
            <person name="Henrissat B."/>
            <person name="Coutinho P.M."/>
            <person name="Wu M."/>
            <person name="Xie G."/>
            <person name="Haft D.H."/>
            <person name="Sait M."/>
            <person name="Badger J."/>
            <person name="Barabote R.D."/>
            <person name="Bradley B."/>
            <person name="Brettin T.S."/>
            <person name="Brinkac L.M."/>
            <person name="Bruce D."/>
            <person name="Creasy T."/>
            <person name="Daugherty S.C."/>
            <person name="Davidsen T.M."/>
            <person name="DeBoy R.T."/>
            <person name="Detter J.C."/>
            <person name="Dodson R.J."/>
            <person name="Durkin A.S."/>
            <person name="Ganapathy A."/>
            <person name="Gwinn-Giglio M."/>
            <person name="Han C.S."/>
            <person name="Khouri H."/>
            <person name="Kiss H."/>
            <person name="Kothari S.P."/>
            <person name="Madupu R."/>
            <person name="Nelson K.E."/>
            <person name="Nelson W.C."/>
            <person name="Paulsen I."/>
            <person name="Penn K."/>
            <person name="Ren Q."/>
            <person name="Rosovitz M.J."/>
            <person name="Selengut J.D."/>
            <person name="Shrivastava S."/>
            <person name="Sullivan S.A."/>
            <person name="Tapia R."/>
            <person name="Thompson L.S."/>
            <person name="Watkins K.L."/>
            <person name="Yang Q."/>
            <person name="Yu C."/>
            <person name="Zafar N."/>
            <person name="Zhou L."/>
            <person name="Kuske C.R."/>
        </authorList>
    </citation>
    <scope>NUCLEOTIDE SEQUENCE [LARGE SCALE GENOMIC DNA]</scope>
    <source>
        <strain>Ellin345</strain>
    </source>
</reference>
<evidence type="ECO:0000255" key="1">
    <source>
        <dbReference type="HAMAP-Rule" id="MF_01864"/>
    </source>
</evidence>
<evidence type="ECO:0000255" key="2">
    <source>
        <dbReference type="PROSITE-ProRule" id="PRU01266"/>
    </source>
</evidence>
<organism>
    <name type="scientific">Koribacter versatilis (strain Ellin345)</name>
    <dbReference type="NCBI Taxonomy" id="204669"/>
    <lineage>
        <taxon>Bacteria</taxon>
        <taxon>Pseudomonadati</taxon>
        <taxon>Acidobacteriota</taxon>
        <taxon>Terriglobia</taxon>
        <taxon>Terriglobales</taxon>
        <taxon>Candidatus Korobacteraceae</taxon>
        <taxon>Candidatus Korobacter</taxon>
    </lineage>
</organism>
<comment type="function">
    <text evidence="1">Catalyzes the methylthiolation of N6-(dimethylallyl)adenosine (i(6)A), leading to the formation of 2-methylthio-N6-(dimethylallyl)adenosine (ms(2)i(6)A) at position 37 in tRNAs that read codons beginning with uridine.</text>
</comment>
<comment type="catalytic activity">
    <reaction evidence="1">
        <text>N(6)-dimethylallyladenosine(37) in tRNA + (sulfur carrier)-SH + AH2 + 2 S-adenosyl-L-methionine = 2-methylsulfanyl-N(6)-dimethylallyladenosine(37) in tRNA + (sulfur carrier)-H + 5'-deoxyadenosine + L-methionine + A + S-adenosyl-L-homocysteine + 2 H(+)</text>
        <dbReference type="Rhea" id="RHEA:37067"/>
        <dbReference type="Rhea" id="RHEA-COMP:10375"/>
        <dbReference type="Rhea" id="RHEA-COMP:10376"/>
        <dbReference type="Rhea" id="RHEA-COMP:14737"/>
        <dbReference type="Rhea" id="RHEA-COMP:14739"/>
        <dbReference type="ChEBI" id="CHEBI:13193"/>
        <dbReference type="ChEBI" id="CHEBI:15378"/>
        <dbReference type="ChEBI" id="CHEBI:17319"/>
        <dbReference type="ChEBI" id="CHEBI:17499"/>
        <dbReference type="ChEBI" id="CHEBI:29917"/>
        <dbReference type="ChEBI" id="CHEBI:57844"/>
        <dbReference type="ChEBI" id="CHEBI:57856"/>
        <dbReference type="ChEBI" id="CHEBI:59789"/>
        <dbReference type="ChEBI" id="CHEBI:64428"/>
        <dbReference type="ChEBI" id="CHEBI:74415"/>
        <dbReference type="ChEBI" id="CHEBI:74417"/>
        <dbReference type="EC" id="2.8.4.3"/>
    </reaction>
</comment>
<comment type="cofactor">
    <cofactor evidence="1">
        <name>[4Fe-4S] cluster</name>
        <dbReference type="ChEBI" id="CHEBI:49883"/>
    </cofactor>
    <text evidence="1">Binds 2 [4Fe-4S] clusters. One cluster is coordinated with 3 cysteines and an exchangeable S-adenosyl-L-methionine.</text>
</comment>
<comment type="subunit">
    <text evidence="1">Monomer.</text>
</comment>
<comment type="subcellular location">
    <subcellularLocation>
        <location evidence="1">Cytoplasm</location>
    </subcellularLocation>
</comment>
<comment type="similarity">
    <text evidence="1">Belongs to the methylthiotransferase family. MiaB subfamily.</text>
</comment>
<gene>
    <name evidence="1" type="primary">miaB</name>
    <name type="ordered locus">Acid345_1874</name>
</gene>
<dbReference type="EC" id="2.8.4.3" evidence="1"/>
<dbReference type="EMBL" id="CP000360">
    <property type="protein sequence ID" value="ABF40875.1"/>
    <property type="molecule type" value="Genomic_DNA"/>
</dbReference>
<dbReference type="RefSeq" id="WP_011522677.1">
    <property type="nucleotide sequence ID" value="NC_008009.1"/>
</dbReference>
<dbReference type="SMR" id="Q1IQH5"/>
<dbReference type="STRING" id="204669.Acid345_1874"/>
<dbReference type="EnsemblBacteria" id="ABF40875">
    <property type="protein sequence ID" value="ABF40875"/>
    <property type="gene ID" value="Acid345_1874"/>
</dbReference>
<dbReference type="KEGG" id="aba:Acid345_1874"/>
<dbReference type="eggNOG" id="COG0621">
    <property type="taxonomic scope" value="Bacteria"/>
</dbReference>
<dbReference type="HOGENOM" id="CLU_018697_2_2_0"/>
<dbReference type="OrthoDB" id="9805215at2"/>
<dbReference type="Proteomes" id="UP000002432">
    <property type="component" value="Chromosome"/>
</dbReference>
<dbReference type="GO" id="GO:0005829">
    <property type="term" value="C:cytosol"/>
    <property type="evidence" value="ECO:0007669"/>
    <property type="project" value="TreeGrafter"/>
</dbReference>
<dbReference type="GO" id="GO:0051539">
    <property type="term" value="F:4 iron, 4 sulfur cluster binding"/>
    <property type="evidence" value="ECO:0007669"/>
    <property type="project" value="UniProtKB-UniRule"/>
</dbReference>
<dbReference type="GO" id="GO:0046872">
    <property type="term" value="F:metal ion binding"/>
    <property type="evidence" value="ECO:0007669"/>
    <property type="project" value="UniProtKB-KW"/>
</dbReference>
<dbReference type="GO" id="GO:0035597">
    <property type="term" value="F:N6-isopentenyladenosine methylthiotransferase activity"/>
    <property type="evidence" value="ECO:0007669"/>
    <property type="project" value="TreeGrafter"/>
</dbReference>
<dbReference type="CDD" id="cd01335">
    <property type="entry name" value="Radical_SAM"/>
    <property type="match status" value="1"/>
</dbReference>
<dbReference type="FunFam" id="3.40.50.12160:FF:000003">
    <property type="entry name" value="CDK5 regulatory subunit-associated protein 1"/>
    <property type="match status" value="1"/>
</dbReference>
<dbReference type="FunFam" id="3.80.30.20:FF:000001">
    <property type="entry name" value="tRNA-2-methylthio-N(6)-dimethylallyladenosine synthase 2"/>
    <property type="match status" value="1"/>
</dbReference>
<dbReference type="Gene3D" id="3.40.50.12160">
    <property type="entry name" value="Methylthiotransferase, N-terminal domain"/>
    <property type="match status" value="1"/>
</dbReference>
<dbReference type="Gene3D" id="3.80.30.20">
    <property type="entry name" value="tm_1862 like domain"/>
    <property type="match status" value="1"/>
</dbReference>
<dbReference type="HAMAP" id="MF_01864">
    <property type="entry name" value="tRNA_metthiotr_MiaB"/>
    <property type="match status" value="1"/>
</dbReference>
<dbReference type="InterPro" id="IPR006638">
    <property type="entry name" value="Elp3/MiaA/NifB-like_rSAM"/>
</dbReference>
<dbReference type="InterPro" id="IPR005839">
    <property type="entry name" value="Methylthiotransferase"/>
</dbReference>
<dbReference type="InterPro" id="IPR020612">
    <property type="entry name" value="Methylthiotransferase_CS"/>
</dbReference>
<dbReference type="InterPro" id="IPR013848">
    <property type="entry name" value="Methylthiotransferase_N"/>
</dbReference>
<dbReference type="InterPro" id="IPR038135">
    <property type="entry name" value="Methylthiotransferase_N_sf"/>
</dbReference>
<dbReference type="InterPro" id="IPR006463">
    <property type="entry name" value="MiaB_methiolase"/>
</dbReference>
<dbReference type="InterPro" id="IPR007197">
    <property type="entry name" value="rSAM"/>
</dbReference>
<dbReference type="InterPro" id="IPR023404">
    <property type="entry name" value="rSAM_horseshoe"/>
</dbReference>
<dbReference type="InterPro" id="IPR002792">
    <property type="entry name" value="TRAM_dom"/>
</dbReference>
<dbReference type="NCBIfam" id="TIGR01574">
    <property type="entry name" value="miaB-methiolase"/>
    <property type="match status" value="1"/>
</dbReference>
<dbReference type="NCBIfam" id="TIGR00089">
    <property type="entry name" value="MiaB/RimO family radical SAM methylthiotransferase"/>
    <property type="match status" value="1"/>
</dbReference>
<dbReference type="PANTHER" id="PTHR43020">
    <property type="entry name" value="CDK5 REGULATORY SUBUNIT-ASSOCIATED PROTEIN 1"/>
    <property type="match status" value="1"/>
</dbReference>
<dbReference type="PANTHER" id="PTHR43020:SF2">
    <property type="entry name" value="MITOCHONDRIAL TRNA METHYLTHIOTRANSFERASE CDK5RAP1"/>
    <property type="match status" value="1"/>
</dbReference>
<dbReference type="Pfam" id="PF04055">
    <property type="entry name" value="Radical_SAM"/>
    <property type="match status" value="1"/>
</dbReference>
<dbReference type="Pfam" id="PF01938">
    <property type="entry name" value="TRAM"/>
    <property type="match status" value="1"/>
</dbReference>
<dbReference type="Pfam" id="PF00919">
    <property type="entry name" value="UPF0004"/>
    <property type="match status" value="1"/>
</dbReference>
<dbReference type="SFLD" id="SFLDF00273">
    <property type="entry name" value="(dimethylallyl)adenosine_tRNA"/>
    <property type="match status" value="1"/>
</dbReference>
<dbReference type="SFLD" id="SFLDG01082">
    <property type="entry name" value="B12-binding_domain_containing"/>
    <property type="match status" value="1"/>
</dbReference>
<dbReference type="SFLD" id="SFLDG01061">
    <property type="entry name" value="methylthiotransferase"/>
    <property type="match status" value="1"/>
</dbReference>
<dbReference type="SMART" id="SM00729">
    <property type="entry name" value="Elp3"/>
    <property type="match status" value="1"/>
</dbReference>
<dbReference type="SUPFAM" id="SSF102114">
    <property type="entry name" value="Radical SAM enzymes"/>
    <property type="match status" value="1"/>
</dbReference>
<dbReference type="PROSITE" id="PS51449">
    <property type="entry name" value="MTTASE_N"/>
    <property type="match status" value="1"/>
</dbReference>
<dbReference type="PROSITE" id="PS01278">
    <property type="entry name" value="MTTASE_RADICAL"/>
    <property type="match status" value="1"/>
</dbReference>
<dbReference type="PROSITE" id="PS51918">
    <property type="entry name" value="RADICAL_SAM"/>
    <property type="match status" value="1"/>
</dbReference>
<dbReference type="PROSITE" id="PS50926">
    <property type="entry name" value="TRAM"/>
    <property type="match status" value="1"/>
</dbReference>